<protein>
    <recommendedName>
        <fullName evidence="1">Argininosuccinate lyase</fullName>
        <shortName evidence="1">ASAL</shortName>
        <ecNumber evidence="1">4.3.2.1</ecNumber>
    </recommendedName>
    <alternativeName>
        <fullName evidence="1">Arginosuccinase</fullName>
    </alternativeName>
</protein>
<feature type="chain" id="PRO_0000137759" description="Argininosuccinate lyase">
    <location>
        <begin position="1"/>
        <end position="437"/>
    </location>
</feature>
<accession>Q97KE5</accession>
<name>ARLY_CLOAB</name>
<comment type="catalytic activity">
    <reaction evidence="1">
        <text>2-(N(omega)-L-arginino)succinate = fumarate + L-arginine</text>
        <dbReference type="Rhea" id="RHEA:24020"/>
        <dbReference type="ChEBI" id="CHEBI:29806"/>
        <dbReference type="ChEBI" id="CHEBI:32682"/>
        <dbReference type="ChEBI" id="CHEBI:57472"/>
        <dbReference type="EC" id="4.3.2.1"/>
    </reaction>
</comment>
<comment type="pathway">
    <text evidence="1">Amino-acid biosynthesis; L-arginine biosynthesis; L-arginine from L-ornithine and carbamoyl phosphate: step 3/3.</text>
</comment>
<comment type="subcellular location">
    <subcellularLocation>
        <location evidence="1">Cytoplasm</location>
    </subcellularLocation>
</comment>
<comment type="similarity">
    <text evidence="1">Belongs to the lyase 1 family. Argininosuccinate lyase subfamily.</text>
</comment>
<sequence length="437" mass="50092">MKLWGGRFRESESELMEEFNASLSFDKKLYEEDIEGSIAHVKMLNKCKIINNEECEEILSGLKSLYKDIRSGKLKIEGDYEDIHSFVEVNLIDRIGAVGKKLHTARSRNDQVAVDMKMYVKKSSYIIIECINKLMETIKDKAENNHFIMPGYTHMQRAQVVTFTHHMMAYYSMFNRDKKRIDNAISNLNESPLGCCALAGTTYDTDREMTSKELGFSKPVDNFLDGVSDRDYIIEVLSAFSICMMHLSRLSEELIIWSTKEFSFIQMDDKFSTGSSIMPQKKNPDAAELIRGKTGRVYGDLIAMLTIMKGIPLAYNKDMQEDKEQFFDSFDTLKMCILVMDGMIATMTVKKEAMKEAVKGGFLNATDVADYLVNKGVAFRDAHKISGELVIYCENNDKAIEELNINEFKNFCNLFDEDVYEFINYNNVIKKGNKKIM</sequence>
<gene>
    <name evidence="1" type="primary">argH</name>
    <name type="ordered locus">CA_C0974</name>
</gene>
<evidence type="ECO:0000255" key="1">
    <source>
        <dbReference type="HAMAP-Rule" id="MF_00006"/>
    </source>
</evidence>
<keyword id="KW-0028">Amino-acid biosynthesis</keyword>
<keyword id="KW-0055">Arginine biosynthesis</keyword>
<keyword id="KW-0963">Cytoplasm</keyword>
<keyword id="KW-0456">Lyase</keyword>
<keyword id="KW-1185">Reference proteome</keyword>
<proteinExistence type="inferred from homology"/>
<organism>
    <name type="scientific">Clostridium acetobutylicum (strain ATCC 824 / DSM 792 / JCM 1419 / IAM 19013 / LMG 5710 / NBRC 13948 / NRRL B-527 / VKM B-1787 / 2291 / W)</name>
    <dbReference type="NCBI Taxonomy" id="272562"/>
    <lineage>
        <taxon>Bacteria</taxon>
        <taxon>Bacillati</taxon>
        <taxon>Bacillota</taxon>
        <taxon>Clostridia</taxon>
        <taxon>Eubacteriales</taxon>
        <taxon>Clostridiaceae</taxon>
        <taxon>Clostridium</taxon>
    </lineage>
</organism>
<reference key="1">
    <citation type="journal article" date="2001" name="J. Bacteriol.">
        <title>Genome sequence and comparative analysis of the solvent-producing bacterium Clostridium acetobutylicum.</title>
        <authorList>
            <person name="Noelling J."/>
            <person name="Breton G."/>
            <person name="Omelchenko M.V."/>
            <person name="Makarova K.S."/>
            <person name="Zeng Q."/>
            <person name="Gibson R."/>
            <person name="Lee H.M."/>
            <person name="Dubois J."/>
            <person name="Qiu D."/>
            <person name="Hitti J."/>
            <person name="Wolf Y.I."/>
            <person name="Tatusov R.L."/>
            <person name="Sabathe F."/>
            <person name="Doucette-Stamm L.A."/>
            <person name="Soucaille P."/>
            <person name="Daly M.J."/>
            <person name="Bennett G.N."/>
            <person name="Koonin E.V."/>
            <person name="Smith D.R."/>
        </authorList>
    </citation>
    <scope>NUCLEOTIDE SEQUENCE [LARGE SCALE GENOMIC DNA]</scope>
    <source>
        <strain>ATCC 824 / DSM 792 / JCM 1419 / IAM 19013 / LMG 5710 / NBRC 13948 / NRRL B-527 / VKM B-1787 / 2291 / W</strain>
    </source>
</reference>
<dbReference type="EC" id="4.3.2.1" evidence="1"/>
<dbReference type="EMBL" id="AE001437">
    <property type="protein sequence ID" value="AAK78950.1"/>
    <property type="molecule type" value="Genomic_DNA"/>
</dbReference>
<dbReference type="PIR" id="C97020">
    <property type="entry name" value="C97020"/>
</dbReference>
<dbReference type="RefSeq" id="NP_347610.1">
    <property type="nucleotide sequence ID" value="NC_003030.1"/>
</dbReference>
<dbReference type="RefSeq" id="WP_010964292.1">
    <property type="nucleotide sequence ID" value="NC_003030.1"/>
</dbReference>
<dbReference type="SMR" id="Q97KE5"/>
<dbReference type="STRING" id="272562.CA_C0974"/>
<dbReference type="GeneID" id="44997488"/>
<dbReference type="KEGG" id="cac:CA_C0974"/>
<dbReference type="PATRIC" id="fig|272562.8.peg.1183"/>
<dbReference type="eggNOG" id="COG0165">
    <property type="taxonomic scope" value="Bacteria"/>
</dbReference>
<dbReference type="HOGENOM" id="CLU_027272_2_3_9"/>
<dbReference type="OrthoDB" id="9769623at2"/>
<dbReference type="UniPathway" id="UPA00068">
    <property type="reaction ID" value="UER00114"/>
</dbReference>
<dbReference type="Proteomes" id="UP000000814">
    <property type="component" value="Chromosome"/>
</dbReference>
<dbReference type="GO" id="GO:0005829">
    <property type="term" value="C:cytosol"/>
    <property type="evidence" value="ECO:0007669"/>
    <property type="project" value="TreeGrafter"/>
</dbReference>
<dbReference type="GO" id="GO:0004056">
    <property type="term" value="F:argininosuccinate lyase activity"/>
    <property type="evidence" value="ECO:0007669"/>
    <property type="project" value="UniProtKB-UniRule"/>
</dbReference>
<dbReference type="GO" id="GO:0042450">
    <property type="term" value="P:arginine biosynthetic process via ornithine"/>
    <property type="evidence" value="ECO:0007669"/>
    <property type="project" value="InterPro"/>
</dbReference>
<dbReference type="GO" id="GO:0006526">
    <property type="term" value="P:L-arginine biosynthetic process"/>
    <property type="evidence" value="ECO:0007669"/>
    <property type="project" value="UniProtKB-UniRule"/>
</dbReference>
<dbReference type="CDD" id="cd01359">
    <property type="entry name" value="Argininosuccinate_lyase"/>
    <property type="match status" value="1"/>
</dbReference>
<dbReference type="FunFam" id="1.10.275.10:FF:000002">
    <property type="entry name" value="Argininosuccinate lyase"/>
    <property type="match status" value="1"/>
</dbReference>
<dbReference type="FunFam" id="1.10.40.30:FF:000001">
    <property type="entry name" value="Argininosuccinate lyase"/>
    <property type="match status" value="1"/>
</dbReference>
<dbReference type="FunFam" id="1.20.200.10:FF:000002">
    <property type="entry name" value="Argininosuccinate lyase"/>
    <property type="match status" value="1"/>
</dbReference>
<dbReference type="Gene3D" id="1.10.40.30">
    <property type="entry name" value="Fumarase/aspartase (C-terminal domain)"/>
    <property type="match status" value="1"/>
</dbReference>
<dbReference type="Gene3D" id="1.20.200.10">
    <property type="entry name" value="Fumarase/aspartase (Central domain)"/>
    <property type="match status" value="1"/>
</dbReference>
<dbReference type="Gene3D" id="1.10.275.10">
    <property type="entry name" value="Fumarase/aspartase (N-terminal domain)"/>
    <property type="match status" value="1"/>
</dbReference>
<dbReference type="HAMAP" id="MF_00006">
    <property type="entry name" value="Arg_succ_lyase"/>
    <property type="match status" value="1"/>
</dbReference>
<dbReference type="InterPro" id="IPR029419">
    <property type="entry name" value="Arg_succ_lyase_C"/>
</dbReference>
<dbReference type="InterPro" id="IPR009049">
    <property type="entry name" value="Argininosuccinate_lyase"/>
</dbReference>
<dbReference type="InterPro" id="IPR024083">
    <property type="entry name" value="Fumarase/histidase_N"/>
</dbReference>
<dbReference type="InterPro" id="IPR020557">
    <property type="entry name" value="Fumarate_lyase_CS"/>
</dbReference>
<dbReference type="InterPro" id="IPR000362">
    <property type="entry name" value="Fumarate_lyase_fam"/>
</dbReference>
<dbReference type="InterPro" id="IPR022761">
    <property type="entry name" value="Fumarate_lyase_N"/>
</dbReference>
<dbReference type="InterPro" id="IPR008948">
    <property type="entry name" value="L-Aspartase-like"/>
</dbReference>
<dbReference type="NCBIfam" id="TIGR00838">
    <property type="entry name" value="argH"/>
    <property type="match status" value="1"/>
</dbReference>
<dbReference type="PANTHER" id="PTHR43814">
    <property type="entry name" value="ARGININOSUCCINATE LYASE"/>
    <property type="match status" value="1"/>
</dbReference>
<dbReference type="PANTHER" id="PTHR43814:SF1">
    <property type="entry name" value="ARGININOSUCCINATE LYASE"/>
    <property type="match status" value="1"/>
</dbReference>
<dbReference type="Pfam" id="PF14698">
    <property type="entry name" value="ASL_C2"/>
    <property type="match status" value="1"/>
</dbReference>
<dbReference type="Pfam" id="PF00206">
    <property type="entry name" value="Lyase_1"/>
    <property type="match status" value="1"/>
</dbReference>
<dbReference type="PRINTS" id="PR00145">
    <property type="entry name" value="ARGSUCLYASE"/>
</dbReference>
<dbReference type="PRINTS" id="PR00149">
    <property type="entry name" value="FUMRATELYASE"/>
</dbReference>
<dbReference type="SUPFAM" id="SSF48557">
    <property type="entry name" value="L-aspartase-like"/>
    <property type="match status" value="1"/>
</dbReference>
<dbReference type="PROSITE" id="PS00163">
    <property type="entry name" value="FUMARATE_LYASES"/>
    <property type="match status" value="1"/>
</dbReference>